<dbReference type="EMBL" id="CP001127">
    <property type="protein sequence ID" value="ACF92143.1"/>
    <property type="molecule type" value="Genomic_DNA"/>
</dbReference>
<dbReference type="RefSeq" id="WP_000622423.1">
    <property type="nucleotide sequence ID" value="NC_011094.1"/>
</dbReference>
<dbReference type="SMR" id="B4TYD2"/>
<dbReference type="KEGG" id="sew:SeSA_A0244"/>
<dbReference type="HOGENOM" id="CLU_073981_2_1_6"/>
<dbReference type="Proteomes" id="UP000001865">
    <property type="component" value="Chromosome"/>
</dbReference>
<dbReference type="GO" id="GO:0005829">
    <property type="term" value="C:cytosol"/>
    <property type="evidence" value="ECO:0007669"/>
    <property type="project" value="GOC"/>
</dbReference>
<dbReference type="GO" id="GO:0043023">
    <property type="term" value="F:ribosomal large subunit binding"/>
    <property type="evidence" value="ECO:0007669"/>
    <property type="project" value="TreeGrafter"/>
</dbReference>
<dbReference type="GO" id="GO:0002184">
    <property type="term" value="P:cytoplasmic translational termination"/>
    <property type="evidence" value="ECO:0007669"/>
    <property type="project" value="TreeGrafter"/>
</dbReference>
<dbReference type="CDD" id="cd00520">
    <property type="entry name" value="RRF"/>
    <property type="match status" value="1"/>
</dbReference>
<dbReference type="FunFam" id="1.10.132.20:FF:000001">
    <property type="entry name" value="Ribosome-recycling factor"/>
    <property type="match status" value="1"/>
</dbReference>
<dbReference type="FunFam" id="3.30.1360.40:FF:000001">
    <property type="entry name" value="Ribosome-recycling factor"/>
    <property type="match status" value="1"/>
</dbReference>
<dbReference type="Gene3D" id="3.30.1360.40">
    <property type="match status" value="1"/>
</dbReference>
<dbReference type="Gene3D" id="1.10.132.20">
    <property type="entry name" value="Ribosome-recycling factor"/>
    <property type="match status" value="1"/>
</dbReference>
<dbReference type="HAMAP" id="MF_00040">
    <property type="entry name" value="RRF"/>
    <property type="match status" value="1"/>
</dbReference>
<dbReference type="InterPro" id="IPR002661">
    <property type="entry name" value="Ribosome_recyc_fac"/>
</dbReference>
<dbReference type="InterPro" id="IPR023584">
    <property type="entry name" value="Ribosome_recyc_fac_dom"/>
</dbReference>
<dbReference type="InterPro" id="IPR036191">
    <property type="entry name" value="RRF_sf"/>
</dbReference>
<dbReference type="NCBIfam" id="TIGR00496">
    <property type="entry name" value="frr"/>
    <property type="match status" value="1"/>
</dbReference>
<dbReference type="PANTHER" id="PTHR20982:SF3">
    <property type="entry name" value="MITOCHONDRIAL RIBOSOME RECYCLING FACTOR PSEUDO 1"/>
    <property type="match status" value="1"/>
</dbReference>
<dbReference type="PANTHER" id="PTHR20982">
    <property type="entry name" value="RIBOSOME RECYCLING FACTOR"/>
    <property type="match status" value="1"/>
</dbReference>
<dbReference type="Pfam" id="PF01765">
    <property type="entry name" value="RRF"/>
    <property type="match status" value="1"/>
</dbReference>
<dbReference type="SUPFAM" id="SSF55194">
    <property type="entry name" value="Ribosome recycling factor, RRF"/>
    <property type="match status" value="1"/>
</dbReference>
<proteinExistence type="inferred from homology"/>
<reference key="1">
    <citation type="journal article" date="2011" name="J. Bacteriol.">
        <title>Comparative genomics of 28 Salmonella enterica isolates: evidence for CRISPR-mediated adaptive sublineage evolution.</title>
        <authorList>
            <person name="Fricke W.F."/>
            <person name="Mammel M.K."/>
            <person name="McDermott P.F."/>
            <person name="Tartera C."/>
            <person name="White D.G."/>
            <person name="Leclerc J.E."/>
            <person name="Ravel J."/>
            <person name="Cebula T.A."/>
        </authorList>
    </citation>
    <scope>NUCLEOTIDE SEQUENCE [LARGE SCALE GENOMIC DNA]</scope>
    <source>
        <strain>CVM19633</strain>
    </source>
</reference>
<keyword id="KW-0963">Cytoplasm</keyword>
<keyword id="KW-0648">Protein biosynthesis</keyword>
<protein>
    <recommendedName>
        <fullName evidence="1">Ribosome-recycling factor</fullName>
        <shortName evidence="1">RRF</shortName>
    </recommendedName>
    <alternativeName>
        <fullName evidence="1">Ribosome-releasing factor</fullName>
    </alternativeName>
</protein>
<feature type="chain" id="PRO_1000090785" description="Ribosome-recycling factor">
    <location>
        <begin position="1"/>
        <end position="185"/>
    </location>
</feature>
<gene>
    <name evidence="1" type="primary">frr</name>
    <name type="ordered locus">SeSA_A0244</name>
</gene>
<comment type="function">
    <text evidence="1">Responsible for the release of ribosomes from messenger RNA at the termination of protein biosynthesis. May increase the efficiency of translation by recycling ribosomes from one round of translation to another.</text>
</comment>
<comment type="subcellular location">
    <subcellularLocation>
        <location evidence="1">Cytoplasm</location>
    </subcellularLocation>
</comment>
<comment type="similarity">
    <text evidence="1">Belongs to the RRF family.</text>
</comment>
<name>RRF_SALSV</name>
<sequence>MISDIRKDAEVRMEKCVEAFKTQISKVRTGRASPSLLDGIVVEYYGTPTPLRQLASVTVEDSRTLKINVFDRSMGPAVEKAIMASDLGLNPSSAGTDIRVPLPPLTEERRKDLTKIVRGEAEQARVAVRNVRRDANDKVKALLKDKAISEDDDRRSQEEVQKMTDAAIKKVDAALADKEAELMQF</sequence>
<organism>
    <name type="scientific">Salmonella schwarzengrund (strain CVM19633)</name>
    <dbReference type="NCBI Taxonomy" id="439843"/>
    <lineage>
        <taxon>Bacteria</taxon>
        <taxon>Pseudomonadati</taxon>
        <taxon>Pseudomonadota</taxon>
        <taxon>Gammaproteobacteria</taxon>
        <taxon>Enterobacterales</taxon>
        <taxon>Enterobacteriaceae</taxon>
        <taxon>Salmonella</taxon>
    </lineage>
</organism>
<accession>B4TYD2</accession>
<evidence type="ECO:0000255" key="1">
    <source>
        <dbReference type="HAMAP-Rule" id="MF_00040"/>
    </source>
</evidence>